<sequence length="578" mass="63348">MVFAAPCWVPPLPSDLPDSTTLEEFIFCQVKDSQTRSELDRSILICGTQGKEYTVQESMERTGRLAQGLSAWLDWPQKPSEEDWKVAAIFNINCVEFFSISHAIHRLGGTVSAINASSTADELEAQLRLSNAQAIFTCNTLLKIAMKASQKVGIPLANIFLTDAPGSYRPDDVYPFQEIDNIVRTARSSLPLLQLGRGQGSSTPAYICFSSGTSGAQKPVLLSHQGIIANIVQINTFEKFRQKGPNVSLCILPLAHSYGLVCVAYNALYRGDRLAVLPSSDVEDLLSIVEKLRINTLYLVPTLLSRILSGGKAGGHDLSCVKEVYTGGAPLHPMLGEHILRHHPTWKTKQCYGATEAGTAVSVTSDCDLWPGSVGCLLPGVQAKIIRSDGSETTKHDESGELWVSSPSLAIGYLSNPLATEATFTVDNTGRTWLRTGDEAKICLSPNGNEHLFIVDRIKDIIKVKGFQVAPVELEQLLLSNDFVEEVAITSRQDKRGEERPQAFVVRTHEGLKEPQDAVSESLQALVKARKARYKWLHPHVIFVDSLPKTTSGKIMRRALRNMCPANSEVNGRLSSKI</sequence>
<feature type="chain" id="PRO_0000444860" description="Acyl-CoA ligase AKT1">
    <location>
        <begin position="1"/>
        <end position="578"/>
    </location>
</feature>
<feature type="region of interest" description="SBD1" evidence="2">
    <location>
        <begin position="281"/>
        <end position="350"/>
    </location>
</feature>
<feature type="region of interest" description="SBD2" evidence="2">
    <location>
        <begin position="351"/>
        <end position="413"/>
    </location>
</feature>
<feature type="short sequence motif" description="Peroxisomal targeting signal type 1" evidence="5">
    <location>
        <begin position="576"/>
        <end position="578"/>
    </location>
</feature>
<feature type="binding site" evidence="1">
    <location>
        <begin position="210"/>
        <end position="218"/>
    </location>
    <ligand>
        <name>ATP</name>
        <dbReference type="ChEBI" id="CHEBI:30616"/>
    </ligand>
</feature>
<feature type="binding site" evidence="1">
    <location>
        <begin position="350"/>
        <end position="355"/>
    </location>
    <ligand>
        <name>ATP</name>
        <dbReference type="ChEBI" id="CHEBI:30616"/>
    </ligand>
</feature>
<feature type="binding site" evidence="1">
    <location>
        <position position="438"/>
    </location>
    <ligand>
        <name>ATP</name>
        <dbReference type="ChEBI" id="CHEBI:30616"/>
    </ligand>
</feature>
<feature type="binding site" evidence="1">
    <location>
        <position position="457"/>
    </location>
    <ligand>
        <name>ATP</name>
        <dbReference type="ChEBI" id="CHEBI:30616"/>
    </ligand>
</feature>
<feature type="binding site" evidence="1">
    <location>
        <position position="554"/>
    </location>
    <ligand>
        <name>ATP</name>
        <dbReference type="ChEBI" id="CHEBI:30616"/>
    </ligand>
</feature>
<gene>
    <name evidence="7" type="primary">AKT1</name>
</gene>
<keyword id="KW-0067">ATP-binding</keyword>
<keyword id="KW-0436">Ligase</keyword>
<keyword id="KW-0547">Nucleotide-binding</keyword>
<keyword id="KW-0576">Peroxisome</keyword>
<keyword id="KW-0843">Virulence</keyword>
<name>AKT1_ALTAL</name>
<organism>
    <name type="scientific">Alternaria alternata</name>
    <name type="common">Alternaria rot fungus</name>
    <name type="synonym">Torula alternata</name>
    <dbReference type="NCBI Taxonomy" id="5599"/>
    <lineage>
        <taxon>Eukaryota</taxon>
        <taxon>Fungi</taxon>
        <taxon>Dikarya</taxon>
        <taxon>Ascomycota</taxon>
        <taxon>Pezizomycotina</taxon>
        <taxon>Dothideomycetes</taxon>
        <taxon>Pleosporomycetidae</taxon>
        <taxon>Pleosporales</taxon>
        <taxon>Pleosporineae</taxon>
        <taxon>Pleosporaceae</taxon>
        <taxon>Alternaria</taxon>
        <taxon>Alternaria sect. Alternaria</taxon>
        <taxon>Alternaria alternata complex</taxon>
    </lineage>
</organism>
<dbReference type="EC" id="6.2.1.-" evidence="9"/>
<dbReference type="EMBL" id="AB015351">
    <property type="protein sequence ID" value="BAA36588.1"/>
    <property type="molecule type" value="Genomic_DNA"/>
</dbReference>
<dbReference type="SMR" id="O93800"/>
<dbReference type="VEuPathDB" id="FungiDB:CC77DRAFT_1098129"/>
<dbReference type="PHI-base" id="PHI:133"/>
<dbReference type="GO" id="GO:0005777">
    <property type="term" value="C:peroxisome"/>
    <property type="evidence" value="ECO:0007669"/>
    <property type="project" value="UniProtKB-SubCell"/>
</dbReference>
<dbReference type="GO" id="GO:0005524">
    <property type="term" value="F:ATP binding"/>
    <property type="evidence" value="ECO:0007669"/>
    <property type="project" value="UniProtKB-KW"/>
</dbReference>
<dbReference type="GO" id="GO:0016405">
    <property type="term" value="F:CoA-ligase activity"/>
    <property type="evidence" value="ECO:0007669"/>
    <property type="project" value="TreeGrafter"/>
</dbReference>
<dbReference type="Gene3D" id="3.30.300.30">
    <property type="match status" value="1"/>
</dbReference>
<dbReference type="Gene3D" id="3.40.50.12780">
    <property type="entry name" value="N-terminal domain of ligase-like"/>
    <property type="match status" value="1"/>
</dbReference>
<dbReference type="InterPro" id="IPR025110">
    <property type="entry name" value="AMP-bd_C"/>
</dbReference>
<dbReference type="InterPro" id="IPR045851">
    <property type="entry name" value="AMP-bd_C_sf"/>
</dbReference>
<dbReference type="InterPro" id="IPR000873">
    <property type="entry name" value="AMP-dep_synth/lig_dom"/>
</dbReference>
<dbReference type="InterPro" id="IPR042099">
    <property type="entry name" value="ANL_N_sf"/>
</dbReference>
<dbReference type="PANTHER" id="PTHR24096:SF422">
    <property type="entry name" value="BCDNA.GH02901"/>
    <property type="match status" value="1"/>
</dbReference>
<dbReference type="PANTHER" id="PTHR24096">
    <property type="entry name" value="LONG-CHAIN-FATTY-ACID--COA LIGASE"/>
    <property type="match status" value="1"/>
</dbReference>
<dbReference type="Pfam" id="PF00501">
    <property type="entry name" value="AMP-binding"/>
    <property type="match status" value="1"/>
</dbReference>
<dbReference type="Pfam" id="PF13193">
    <property type="entry name" value="AMP-binding_C"/>
    <property type="match status" value="1"/>
</dbReference>
<dbReference type="SUPFAM" id="SSF56801">
    <property type="entry name" value="Acetyl-CoA synthetase-like"/>
    <property type="match status" value="1"/>
</dbReference>
<protein>
    <recommendedName>
        <fullName evidence="7">Acyl-CoA ligase AKT1</fullName>
        <ecNumber evidence="9">6.2.1.-</ecNumber>
    </recommendedName>
    <alternativeName>
        <fullName evidence="7">AK-toxin biosynthesis protein 1</fullName>
    </alternativeName>
</protein>
<proteinExistence type="predicted"/>
<reference key="1">
    <citation type="journal article" date="1999" name="Mol. Plant Microbe Interact.">
        <title>Insertional mutagenesis and cloning of the genes required for biosynthesis of the host-specific AK-toxin in the Japanese pear pathotype of Alternaria alternata.</title>
        <authorList>
            <person name="Tanaka A."/>
            <person name="Shiotani H."/>
            <person name="Yamamoto M."/>
            <person name="Tsuge T."/>
        </authorList>
    </citation>
    <scope>NUCLEOTIDE SEQUENCE [GENOMIC DNA]</scope>
    <scope>FUNCTION</scope>
    <scope>DISRUPTION PHENOTYPE</scope>
    <scope>PATHWAY</scope>
    <source>
        <strain>15A</strain>
    </source>
</reference>
<reference key="2">
    <citation type="journal article" date="2000" name="Mol. Plant Microbe Interact.">
        <title>Structural and functional complexity of the genomic region controlling AK-toxin biosynthesis and pathogenicity in the Japanese pear pathotype of Alternaria alternata.</title>
        <authorList>
            <person name="Tanaka A."/>
            <person name="Tsuge T."/>
        </authorList>
    </citation>
    <scope>FUNCTION</scope>
</reference>
<reference key="3">
    <citation type="journal article" date="2010" name="Eukaryot. Cell">
        <title>Contribution of peroxisomes to secondary metabolism and pathogenicity in the fungal plant pathogen Alternaria alternata.</title>
        <authorList>
            <person name="Imazaki A."/>
            <person name="Tanaka A."/>
            <person name="Harimoto Y."/>
            <person name="Yamamoto M."/>
            <person name="Akimitsu K."/>
            <person name="Park P."/>
            <person name="Tsuge T."/>
        </authorList>
    </citation>
    <scope>FUNCTION</scope>
    <scope>SUBCELLULAR LOCATION</scope>
</reference>
<reference key="4">
    <citation type="journal article" date="2013" name="FEMS Microbiol. Rev.">
        <title>Host-selective toxins produced by the plant pathogenic fungus Alternaria alternata.</title>
        <authorList>
            <person name="Tsuge T."/>
            <person name="Harimoto Y."/>
            <person name="Akimitsu K."/>
            <person name="Ohtani K."/>
            <person name="Kodama M."/>
            <person name="Akagi Y."/>
            <person name="Egusa M."/>
            <person name="Yamamoto M."/>
            <person name="Otani H."/>
        </authorList>
    </citation>
    <scope>REVIEW ON HOST-SELECTIVE TOXINS</scope>
</reference>
<reference key="5">
    <citation type="journal article" date="2014" name="New Phytol.">
        <title>Complex regulation of secondary metabolism controlling pathogenicity in the phytopathogenic fungus Alternaria alternata.</title>
        <authorList>
            <person name="Takaoka S."/>
            <person name="Kurata M."/>
            <person name="Harimoto Y."/>
            <person name="Hatta R."/>
            <person name="Yamamoto M."/>
            <person name="Akimitsu K."/>
            <person name="Tsuge T."/>
        </authorList>
    </citation>
    <scope>FUNCTION</scope>
    <source>
        <strain>15A</strain>
    </source>
</reference>
<comment type="function">
    <text evidence="3 4 5 6 8">Acyl-CoA ligase; part of the gene clusters that mediate the biosynthesis of the host-selective toxins (HSTs) AK-toxins responsible for Japanese pear black spot disease by the Japanese pear pathotype (PubMed:10432635, PubMed:20348386). AK-toxins are esters of 9,10-epoxy 8-hydroxy 9-methyldecatrienoic acid (EDA) (PubMed:22846083). On cellular level, AK-toxins affect plasma membrane of susceptible cells and cause a sudden increase in loss of K(+) after a few minutes of toxin treatment (PubMed:22846083). The acyl-CoA ligase AKT1, the hydrolase AKT2 and enoyl-CoA hydratase AKT3 are all involved in the biosynthesis of the AK-, AF- and ACT-toxin common 9,10-epoxy-8-hydroxy-9-methyl-decatrienoic acid (EDA) structural moiety (PubMed:10432635, PubMed:10975654, PubMed:22846083). Part of the EDA biosynthesis occurs in the peroxisome since these 3 enzymes are localized in peroxisomes (PubMed:20348386). The exact roles of the 3 enzymes, as well as of additional AK-toxin clusters enzymes, including AKT4, AKT6 and AKTS1, have still to be elucidated (PubMed:10432635, PubMed:10975654, PubMed:22846083). The Cytochrome P450 monooxygenase AKT7 on the other side functions to limit production of EDA and AK-toxin, probably via the catalysis of a side reaction of EDA or its precursor (PubMed:24611558).</text>
</comment>
<comment type="pathway">
    <text evidence="3">Mycotoxin biosynthesis.</text>
</comment>
<comment type="subcellular location">
    <subcellularLocation>
        <location evidence="5">Peroxisome</location>
    </subcellularLocation>
    <text evidence="5">The peroxisomal location requires the C-terminal tripeptide peroxisomal targeting signal.</text>
</comment>
<comment type="disruption phenotype">
    <text evidence="3">Abolishes the production of AK-toxin and impairs the pathogenicity.</text>
</comment>
<comment type="miscellaneous">
    <text evidence="4">Gene clusters encoding host-selective toxins (HSTs) are localized on conditionally dispensable chromosomes (CDCs), also called supernumerary chromosomes, where they are present in multiple copies (PubMed:10975654). The CDCs are not essential for saprophytic growth but controls host-selective pathogenicity (PubMed:10975654).</text>
</comment>
<evidence type="ECO:0000250" key="1">
    <source>
        <dbReference type="UniProtKB" id="Q08AH3"/>
    </source>
</evidence>
<evidence type="ECO:0000250" key="2">
    <source>
        <dbReference type="UniProtKB" id="Q42524"/>
    </source>
</evidence>
<evidence type="ECO:0000269" key="3">
    <source>
    </source>
</evidence>
<evidence type="ECO:0000269" key="4">
    <source>
    </source>
</evidence>
<evidence type="ECO:0000269" key="5">
    <source>
    </source>
</evidence>
<evidence type="ECO:0000269" key="6">
    <source>
    </source>
</evidence>
<evidence type="ECO:0000303" key="7">
    <source>
    </source>
</evidence>
<evidence type="ECO:0000303" key="8">
    <source>
    </source>
</evidence>
<evidence type="ECO:0000305" key="9">
    <source>
    </source>
</evidence>
<accession>O93800</accession>